<name>ATPB_ECO81</name>
<organism>
    <name type="scientific">Escherichia coli O81 (strain ED1a)</name>
    <dbReference type="NCBI Taxonomy" id="585397"/>
    <lineage>
        <taxon>Bacteria</taxon>
        <taxon>Pseudomonadati</taxon>
        <taxon>Pseudomonadota</taxon>
        <taxon>Gammaproteobacteria</taxon>
        <taxon>Enterobacterales</taxon>
        <taxon>Enterobacteriaceae</taxon>
        <taxon>Escherichia</taxon>
    </lineage>
</organism>
<dbReference type="EC" id="7.1.2.2" evidence="1"/>
<dbReference type="EMBL" id="CU928162">
    <property type="protein sequence ID" value="CAR10542.2"/>
    <property type="molecule type" value="Genomic_DNA"/>
</dbReference>
<dbReference type="RefSeq" id="WP_000190506.1">
    <property type="nucleotide sequence ID" value="NC_011745.1"/>
</dbReference>
<dbReference type="SMR" id="B7N2H1"/>
<dbReference type="GeneID" id="93778235"/>
<dbReference type="KEGG" id="ecq:ECED1_4422"/>
<dbReference type="HOGENOM" id="CLU_022398_0_2_6"/>
<dbReference type="Proteomes" id="UP000000748">
    <property type="component" value="Chromosome"/>
</dbReference>
<dbReference type="GO" id="GO:0005886">
    <property type="term" value="C:plasma membrane"/>
    <property type="evidence" value="ECO:0007669"/>
    <property type="project" value="UniProtKB-SubCell"/>
</dbReference>
<dbReference type="GO" id="GO:0045259">
    <property type="term" value="C:proton-transporting ATP synthase complex"/>
    <property type="evidence" value="ECO:0007669"/>
    <property type="project" value="UniProtKB-KW"/>
</dbReference>
<dbReference type="GO" id="GO:0005524">
    <property type="term" value="F:ATP binding"/>
    <property type="evidence" value="ECO:0007669"/>
    <property type="project" value="UniProtKB-UniRule"/>
</dbReference>
<dbReference type="GO" id="GO:0016887">
    <property type="term" value="F:ATP hydrolysis activity"/>
    <property type="evidence" value="ECO:0007669"/>
    <property type="project" value="InterPro"/>
</dbReference>
<dbReference type="GO" id="GO:0046933">
    <property type="term" value="F:proton-transporting ATP synthase activity, rotational mechanism"/>
    <property type="evidence" value="ECO:0007669"/>
    <property type="project" value="UniProtKB-UniRule"/>
</dbReference>
<dbReference type="CDD" id="cd18110">
    <property type="entry name" value="ATP-synt_F1_beta_C"/>
    <property type="match status" value="1"/>
</dbReference>
<dbReference type="CDD" id="cd18115">
    <property type="entry name" value="ATP-synt_F1_beta_N"/>
    <property type="match status" value="1"/>
</dbReference>
<dbReference type="CDD" id="cd01133">
    <property type="entry name" value="F1-ATPase_beta_CD"/>
    <property type="match status" value="1"/>
</dbReference>
<dbReference type="FunFam" id="1.10.1140.10:FF:000001">
    <property type="entry name" value="ATP synthase subunit beta"/>
    <property type="match status" value="1"/>
</dbReference>
<dbReference type="FunFam" id="2.40.10.170:FF:000003">
    <property type="entry name" value="ATP synthase subunit beta"/>
    <property type="match status" value="1"/>
</dbReference>
<dbReference type="FunFam" id="3.40.50.300:FF:000004">
    <property type="entry name" value="ATP synthase subunit beta"/>
    <property type="match status" value="1"/>
</dbReference>
<dbReference type="Gene3D" id="2.40.10.170">
    <property type="match status" value="1"/>
</dbReference>
<dbReference type="Gene3D" id="1.10.1140.10">
    <property type="entry name" value="Bovine Mitochondrial F1-atpase, Atp Synthase Beta Chain, Chain D, domain 3"/>
    <property type="match status" value="1"/>
</dbReference>
<dbReference type="Gene3D" id="3.40.50.300">
    <property type="entry name" value="P-loop containing nucleotide triphosphate hydrolases"/>
    <property type="match status" value="1"/>
</dbReference>
<dbReference type="HAMAP" id="MF_01347">
    <property type="entry name" value="ATP_synth_beta_bact"/>
    <property type="match status" value="1"/>
</dbReference>
<dbReference type="InterPro" id="IPR003593">
    <property type="entry name" value="AAA+_ATPase"/>
</dbReference>
<dbReference type="InterPro" id="IPR055190">
    <property type="entry name" value="ATP-synt_VA_C"/>
</dbReference>
<dbReference type="InterPro" id="IPR005722">
    <property type="entry name" value="ATP_synth_F1_bsu"/>
</dbReference>
<dbReference type="InterPro" id="IPR020003">
    <property type="entry name" value="ATPase_a/bsu_AS"/>
</dbReference>
<dbReference type="InterPro" id="IPR050053">
    <property type="entry name" value="ATPase_alpha/beta_chains"/>
</dbReference>
<dbReference type="InterPro" id="IPR004100">
    <property type="entry name" value="ATPase_F1/V1/A1_a/bsu_N"/>
</dbReference>
<dbReference type="InterPro" id="IPR036121">
    <property type="entry name" value="ATPase_F1/V1/A1_a/bsu_N_sf"/>
</dbReference>
<dbReference type="InterPro" id="IPR000194">
    <property type="entry name" value="ATPase_F1/V1/A1_a/bsu_nucl-bd"/>
</dbReference>
<dbReference type="InterPro" id="IPR024034">
    <property type="entry name" value="ATPase_F1/V1_b/a_C"/>
</dbReference>
<dbReference type="InterPro" id="IPR027417">
    <property type="entry name" value="P-loop_NTPase"/>
</dbReference>
<dbReference type="NCBIfam" id="TIGR01039">
    <property type="entry name" value="atpD"/>
    <property type="match status" value="1"/>
</dbReference>
<dbReference type="PANTHER" id="PTHR15184">
    <property type="entry name" value="ATP SYNTHASE"/>
    <property type="match status" value="1"/>
</dbReference>
<dbReference type="PANTHER" id="PTHR15184:SF71">
    <property type="entry name" value="ATP SYNTHASE SUBUNIT BETA, MITOCHONDRIAL"/>
    <property type="match status" value="1"/>
</dbReference>
<dbReference type="Pfam" id="PF00006">
    <property type="entry name" value="ATP-synt_ab"/>
    <property type="match status" value="1"/>
</dbReference>
<dbReference type="Pfam" id="PF02874">
    <property type="entry name" value="ATP-synt_ab_N"/>
    <property type="match status" value="1"/>
</dbReference>
<dbReference type="Pfam" id="PF22919">
    <property type="entry name" value="ATP-synt_VA_C"/>
    <property type="match status" value="1"/>
</dbReference>
<dbReference type="SMART" id="SM00382">
    <property type="entry name" value="AAA"/>
    <property type="match status" value="1"/>
</dbReference>
<dbReference type="SUPFAM" id="SSF47917">
    <property type="entry name" value="C-terminal domain of alpha and beta subunits of F1 ATP synthase"/>
    <property type="match status" value="1"/>
</dbReference>
<dbReference type="SUPFAM" id="SSF50615">
    <property type="entry name" value="N-terminal domain of alpha and beta subunits of F1 ATP synthase"/>
    <property type="match status" value="1"/>
</dbReference>
<dbReference type="SUPFAM" id="SSF52540">
    <property type="entry name" value="P-loop containing nucleoside triphosphate hydrolases"/>
    <property type="match status" value="1"/>
</dbReference>
<dbReference type="PROSITE" id="PS00152">
    <property type="entry name" value="ATPASE_ALPHA_BETA"/>
    <property type="match status" value="1"/>
</dbReference>
<keyword id="KW-0066">ATP synthesis</keyword>
<keyword id="KW-0067">ATP-binding</keyword>
<keyword id="KW-0997">Cell inner membrane</keyword>
<keyword id="KW-1003">Cell membrane</keyword>
<keyword id="KW-0139">CF(1)</keyword>
<keyword id="KW-0375">Hydrogen ion transport</keyword>
<keyword id="KW-0406">Ion transport</keyword>
<keyword id="KW-0472">Membrane</keyword>
<keyword id="KW-0547">Nucleotide-binding</keyword>
<keyword id="KW-1278">Translocase</keyword>
<keyword id="KW-0813">Transport</keyword>
<sequence>MATGKIVQVIGAVVDVEFPQDAVPRVYDALEVQNGNERLVLEVQQQLGGGIVRTIAMGSSDGLRRGLDVKDLEHPIEVPVGKATLGRIMNVLGEPVDMKGEIGEEERWAIHRAAPSYEELSNSQELLETGIKVIDLMCPFAKGGKVGLFGGAGVGKTVNMMELIRNIAIEHSGYSVFAGVGERTREGNDFYHEMTDSNVIDKVSLVYGQMNEPPGNRLRVALTGLTMAEKFRDEGRDVLLFVDNIYRYTLAGTEVSALLGRMPSAVGYQPTLAEEMGVLQERITSTKTGSITSVQAVYVPADDLTDPSPATTFAHLDATVVLSRQIASLGIYPAVDPLDSTSRQLDPLVVGQEHYDTARGVQSILQRYQELKDIIAILGMDELSEEDKLVVARARKIQRFLSQPFFVAEVFTGSPGKYVSLKDTIRGFKGIMEGEYDHLPEQAFYMVGSIEEAVEKAKKL</sequence>
<proteinExistence type="inferred from homology"/>
<protein>
    <recommendedName>
        <fullName evidence="1">ATP synthase subunit beta</fullName>
        <ecNumber evidence="1">7.1.2.2</ecNumber>
    </recommendedName>
    <alternativeName>
        <fullName evidence="1">ATP synthase F1 sector subunit beta</fullName>
    </alternativeName>
    <alternativeName>
        <fullName evidence="1">F-ATPase subunit beta</fullName>
    </alternativeName>
</protein>
<reference key="1">
    <citation type="journal article" date="2009" name="PLoS Genet.">
        <title>Organised genome dynamics in the Escherichia coli species results in highly diverse adaptive paths.</title>
        <authorList>
            <person name="Touchon M."/>
            <person name="Hoede C."/>
            <person name="Tenaillon O."/>
            <person name="Barbe V."/>
            <person name="Baeriswyl S."/>
            <person name="Bidet P."/>
            <person name="Bingen E."/>
            <person name="Bonacorsi S."/>
            <person name="Bouchier C."/>
            <person name="Bouvet O."/>
            <person name="Calteau A."/>
            <person name="Chiapello H."/>
            <person name="Clermont O."/>
            <person name="Cruveiller S."/>
            <person name="Danchin A."/>
            <person name="Diard M."/>
            <person name="Dossat C."/>
            <person name="Karoui M.E."/>
            <person name="Frapy E."/>
            <person name="Garry L."/>
            <person name="Ghigo J.M."/>
            <person name="Gilles A.M."/>
            <person name="Johnson J."/>
            <person name="Le Bouguenec C."/>
            <person name="Lescat M."/>
            <person name="Mangenot S."/>
            <person name="Martinez-Jehanne V."/>
            <person name="Matic I."/>
            <person name="Nassif X."/>
            <person name="Oztas S."/>
            <person name="Petit M.A."/>
            <person name="Pichon C."/>
            <person name="Rouy Z."/>
            <person name="Ruf C.S."/>
            <person name="Schneider D."/>
            <person name="Tourret J."/>
            <person name="Vacherie B."/>
            <person name="Vallenet D."/>
            <person name="Medigue C."/>
            <person name="Rocha E.P.C."/>
            <person name="Denamur E."/>
        </authorList>
    </citation>
    <scope>NUCLEOTIDE SEQUENCE [LARGE SCALE GENOMIC DNA]</scope>
    <source>
        <strain>ED1a</strain>
    </source>
</reference>
<comment type="function">
    <text evidence="1">Produces ATP from ADP in the presence of a proton gradient across the membrane. The catalytic sites are hosted primarily by the beta subunits.</text>
</comment>
<comment type="catalytic activity">
    <reaction evidence="1">
        <text>ATP + H2O + 4 H(+)(in) = ADP + phosphate + 5 H(+)(out)</text>
        <dbReference type="Rhea" id="RHEA:57720"/>
        <dbReference type="ChEBI" id="CHEBI:15377"/>
        <dbReference type="ChEBI" id="CHEBI:15378"/>
        <dbReference type="ChEBI" id="CHEBI:30616"/>
        <dbReference type="ChEBI" id="CHEBI:43474"/>
        <dbReference type="ChEBI" id="CHEBI:456216"/>
        <dbReference type="EC" id="7.1.2.2"/>
    </reaction>
</comment>
<comment type="subunit">
    <text evidence="1">F-type ATPases have 2 components, CF(1) - the catalytic core - and CF(0) - the membrane proton channel. CF(1) has five subunits: alpha(3), beta(3), gamma(1), delta(1), epsilon(1). CF(0) has three main subunits: a(1), b(2) and c(9-12). The alpha and beta chains form an alternating ring which encloses part of the gamma chain. CF(1) is attached to CF(0) by a central stalk formed by the gamma and epsilon chains, while a peripheral stalk is formed by the delta and b chains.</text>
</comment>
<comment type="subcellular location">
    <subcellularLocation>
        <location evidence="1">Cell inner membrane</location>
        <topology evidence="1">Peripheral membrane protein</topology>
    </subcellularLocation>
</comment>
<comment type="similarity">
    <text evidence="1">Belongs to the ATPase alpha/beta chains family.</text>
</comment>
<feature type="chain" id="PRO_1000166591" description="ATP synthase subunit beta">
    <location>
        <begin position="1"/>
        <end position="460"/>
    </location>
</feature>
<feature type="binding site" evidence="1">
    <location>
        <begin position="150"/>
        <end position="157"/>
    </location>
    <ligand>
        <name>ATP</name>
        <dbReference type="ChEBI" id="CHEBI:30616"/>
    </ligand>
</feature>
<accession>B7N2H1</accession>
<gene>
    <name evidence="1" type="primary">atpD</name>
    <name type="ordered locus">ECED1_4422</name>
</gene>
<evidence type="ECO:0000255" key="1">
    <source>
        <dbReference type="HAMAP-Rule" id="MF_01347"/>
    </source>
</evidence>